<sequence>MGDKEEVLEAVLKETVDLENVPIEEVFESLRCSREGLTTEAADERLALFGHNKLEEKKESKFLKFLGFMWNPLSWVMEAAAIMAIALANGGGKPPDWQDFVGIITLLVINSTISFIEENNAGNAAAALMARLAPKAKVLRDGRWGEQDAAILVPGDIISIKLGDIVPADARLLEGDPLKIDQSSLTGESLPVTKGPGDGVYSGSTCKQGELEAVVIATGVHTFFGKAAHLVDTTNHVGHFQQVLTAIGNFCICSIAVGMIIEIVVMYPIQHRAYRPGIDNLLVLLIGGIPIAMPTVLSVTMAIGSHRLSQQGAITKRMTAIEEMAGMDVLCSDKTGTLTLNKLTVDKNLIEVFTKGVDADTVVLMAAQASRLENQDAIDAAIVGMLADPKEARAGVREVHFLPFNPTDKRTALTYIDSDGKMHRVSKGAPEQILNLAHNRAEIERRVHAVIDKFAERGLRSLAVAYQEVPEGTKESAGGPWQFMGLMPLFDPPRHDSAETIRRALNLGVNVKMITGDQLAIGKETGRRLGMGTNMYPSSALLGQHKDESIGALPIDDLIEKADGFAGVFPEHKYEIVKRLQARKHICGMTGDGVNDAPALKKADIGIAVADATDAARSASDIVLTEPGLSVIISAVLTSRAIFQRMKNYTIYAVSITIRIVLGFMLLALIWKFDFPPFMVLIIAILNDGTIMTISKDRVKPSPLPDSWKLSEIFATGVVFGSYMAMMTVIFFWAAYKTDFFPRTFGVSTLEKTAHDDFRKLASAIYLQVSIISQALIFVTRSRSWSYVERPGMLLVVAFILAQLVATLIAVYANWSFAAIEGIGWGWAGVIWLYNIVFYIPLDIIKFLIRYALSGRAWDLVIEQRVAFTRQKDFGKEQRELQWAHAQRTLHGLQAPDAKMFPERTHFNELSQMAEEAKRRAEIARLRELHTLKGHVESVVRLKGLDIETIQQAYTV</sequence>
<reference key="1">
    <citation type="journal article" date="2000" name="DNA Res.">
        <title>Structural analysis of Arabidopsis thaliana chromosome 5. X. Sequence features of the regions of 3,076,755 bp covered by sixty P1 and TAC clones.</title>
        <authorList>
            <person name="Sato S."/>
            <person name="Nakamura Y."/>
            <person name="Kaneko T."/>
            <person name="Katoh T."/>
            <person name="Asamizu E."/>
            <person name="Kotani H."/>
            <person name="Tabata S."/>
        </authorList>
    </citation>
    <scope>NUCLEOTIDE SEQUENCE [LARGE SCALE GENOMIC DNA]</scope>
    <source>
        <strain>cv. Columbia</strain>
    </source>
</reference>
<reference key="2">
    <citation type="journal article" date="2017" name="Plant J.">
        <title>Araport11: a complete reannotation of the Arabidopsis thaliana reference genome.</title>
        <authorList>
            <person name="Cheng C.Y."/>
            <person name="Krishnakumar V."/>
            <person name="Chan A.P."/>
            <person name="Thibaud-Nissen F."/>
            <person name="Schobel S."/>
            <person name="Town C.D."/>
        </authorList>
    </citation>
    <scope>GENOME REANNOTATION</scope>
    <source>
        <strain>cv. Columbia</strain>
    </source>
</reference>
<reference key="3">
    <citation type="journal article" date="2003" name="Science">
        <title>Empirical analysis of transcriptional activity in the Arabidopsis genome.</title>
        <authorList>
            <person name="Yamada K."/>
            <person name="Lim J."/>
            <person name="Dale J.M."/>
            <person name="Chen H."/>
            <person name="Shinn P."/>
            <person name="Palm C.J."/>
            <person name="Southwick A.M."/>
            <person name="Wu H.C."/>
            <person name="Kim C.J."/>
            <person name="Nguyen M."/>
            <person name="Pham P.K."/>
            <person name="Cheuk R.F."/>
            <person name="Karlin-Newmann G."/>
            <person name="Liu S.X."/>
            <person name="Lam B."/>
            <person name="Sakano H."/>
            <person name="Wu T."/>
            <person name="Yu G."/>
            <person name="Miranda M."/>
            <person name="Quach H.L."/>
            <person name="Tripp M."/>
            <person name="Chang C.H."/>
            <person name="Lee J.M."/>
            <person name="Toriumi M.J."/>
            <person name="Chan M.M."/>
            <person name="Tang C.C."/>
            <person name="Onodera C.S."/>
            <person name="Deng J.M."/>
            <person name="Akiyama K."/>
            <person name="Ansari Y."/>
            <person name="Arakawa T."/>
            <person name="Banh J."/>
            <person name="Banno F."/>
            <person name="Bowser L."/>
            <person name="Brooks S.Y."/>
            <person name="Carninci P."/>
            <person name="Chao Q."/>
            <person name="Choy N."/>
            <person name="Enju A."/>
            <person name="Goldsmith A.D."/>
            <person name="Gurjal M."/>
            <person name="Hansen N.F."/>
            <person name="Hayashizaki Y."/>
            <person name="Johnson-Hopson C."/>
            <person name="Hsuan V.W."/>
            <person name="Iida K."/>
            <person name="Karnes M."/>
            <person name="Khan S."/>
            <person name="Koesema E."/>
            <person name="Ishida J."/>
            <person name="Jiang P.X."/>
            <person name="Jones T."/>
            <person name="Kawai J."/>
            <person name="Kamiya A."/>
            <person name="Meyers C."/>
            <person name="Nakajima M."/>
            <person name="Narusaka M."/>
            <person name="Seki M."/>
            <person name="Sakurai T."/>
            <person name="Satou M."/>
            <person name="Tamse R."/>
            <person name="Vaysberg M."/>
            <person name="Wallender E.K."/>
            <person name="Wong C."/>
            <person name="Yamamura Y."/>
            <person name="Yuan S."/>
            <person name="Shinozaki K."/>
            <person name="Davis R.W."/>
            <person name="Theologis A."/>
            <person name="Ecker J.R."/>
        </authorList>
    </citation>
    <scope>NUCLEOTIDE SEQUENCE [LARGE SCALE MRNA]</scope>
    <source>
        <strain>cv. Columbia</strain>
    </source>
</reference>
<reference key="4">
    <citation type="journal article" date="2005" name="Plant Cell Physiol.">
        <title>Biochemical characterization of plasma membrane H+-ATPase activation in guard cell protoplasts of Arabidopsis thaliana in response to blue light.</title>
        <authorList>
            <person name="Ueno K."/>
            <person name="Kinoshita T."/>
            <person name="Inoue S."/>
            <person name="Emi T."/>
            <person name="Shimazaki K."/>
        </authorList>
    </citation>
    <scope>TISSUE SPECIFICITY</scope>
    <source>
        <strain>cv. Columbia GL1</strain>
    </source>
</reference>
<reference key="5">
    <citation type="journal article" date="2009" name="Plant Physiol.">
        <title>Large-scale Arabidopsis phosphoproteome profiling reveals novel chloroplast kinase substrates and phosphorylation networks.</title>
        <authorList>
            <person name="Reiland S."/>
            <person name="Messerli G."/>
            <person name="Baerenfaller K."/>
            <person name="Gerrits B."/>
            <person name="Endler A."/>
            <person name="Grossmann J."/>
            <person name="Gruissem W."/>
            <person name="Baginsky S."/>
        </authorList>
    </citation>
    <scope>PHOSPHORYLATION [LARGE SCALE ANALYSIS] AT THR-889</scope>
    <scope>IDENTIFICATION BY MASS SPECTROMETRY [LARGE SCALE ANALYSIS]</scope>
</reference>
<comment type="function">
    <text evidence="1">The plasma membrane H(+) ATPase of plants and fungi generates a proton gradient that drives the active transport of nutrients by H(+)-symport. The resulting external acidification and/or internal alkinization may mediate growth responses (By similarity).</text>
</comment>
<comment type="catalytic activity">
    <reaction>
        <text>ATP + H2O + H(+)(in) = ADP + phosphate + 2 H(+)(out)</text>
        <dbReference type="Rhea" id="RHEA:20852"/>
        <dbReference type="ChEBI" id="CHEBI:15377"/>
        <dbReference type="ChEBI" id="CHEBI:15378"/>
        <dbReference type="ChEBI" id="CHEBI:30616"/>
        <dbReference type="ChEBI" id="CHEBI:43474"/>
        <dbReference type="ChEBI" id="CHEBI:456216"/>
        <dbReference type="EC" id="7.1.2.1"/>
    </reaction>
</comment>
<comment type="subunit">
    <text evidence="1">Binds to 14-3-3 proteins. The binding is induced by phosphorylation of Thr-955. Binding to 14-3-3 proteins activates the H(+)-ATPase (By similarity).</text>
</comment>
<comment type="subcellular location">
    <subcellularLocation>
        <location>Membrane</location>
        <topology>Multi-pass membrane protein</topology>
    </subcellularLocation>
</comment>
<comment type="tissue specificity">
    <text evidence="5">Expressed in guard cells, mesophyll cells, leaves and roots.</text>
</comment>
<comment type="similarity">
    <text evidence="6">Belongs to the cation transport ATPase (P-type) (TC 3.A.3) family. Type IIIA subfamily.</text>
</comment>
<organism>
    <name type="scientific">Arabidopsis thaliana</name>
    <name type="common">Mouse-ear cress</name>
    <dbReference type="NCBI Taxonomy" id="3702"/>
    <lineage>
        <taxon>Eukaryota</taxon>
        <taxon>Viridiplantae</taxon>
        <taxon>Streptophyta</taxon>
        <taxon>Embryophyta</taxon>
        <taxon>Tracheophyta</taxon>
        <taxon>Spermatophyta</taxon>
        <taxon>Magnoliopsida</taxon>
        <taxon>eudicotyledons</taxon>
        <taxon>Gunneridae</taxon>
        <taxon>Pentapetalae</taxon>
        <taxon>rosids</taxon>
        <taxon>malvids</taxon>
        <taxon>Brassicales</taxon>
        <taxon>Brassicaceae</taxon>
        <taxon>Camelineae</taxon>
        <taxon>Arabidopsis</taxon>
    </lineage>
</organism>
<gene>
    <name type="primary">AHA11</name>
    <name type="ordered locus">At5g62670</name>
    <name type="ORF">MRG21.9</name>
</gene>
<protein>
    <recommendedName>
        <fullName>ATPase 11, plasma membrane-type</fullName>
        <ecNumber>7.1.2.1</ecNumber>
    </recommendedName>
    <alternativeName>
        <fullName>Proton pump 11</fullName>
    </alternativeName>
</protein>
<proteinExistence type="evidence at protein level"/>
<feature type="chain" id="PRO_0000046284" description="ATPase 11, plasma membrane-type">
    <location>
        <begin position="1"/>
        <end position="956"/>
    </location>
</feature>
<feature type="topological domain" description="Cytoplasmic" evidence="4">
    <location>
        <begin position="1"/>
        <end position="65"/>
    </location>
</feature>
<feature type="transmembrane region" description="Helical; Name=1" evidence="4">
    <location>
        <begin position="66"/>
        <end position="85"/>
    </location>
</feature>
<feature type="topological domain" description="Extracellular" evidence="4">
    <location>
        <begin position="86"/>
        <end position="97"/>
    </location>
</feature>
<feature type="transmembrane region" description="Helical; Name=2" evidence="4">
    <location>
        <begin position="98"/>
        <end position="118"/>
    </location>
</feature>
<feature type="topological domain" description="Cytoplasmic" evidence="4">
    <location>
        <begin position="119"/>
        <end position="247"/>
    </location>
</feature>
<feature type="transmembrane region" description="Helical; Name=3" evidence="4">
    <location>
        <begin position="248"/>
        <end position="268"/>
    </location>
</feature>
<feature type="topological domain" description="Extracellular" evidence="4">
    <location>
        <begin position="269"/>
        <end position="277"/>
    </location>
</feature>
<feature type="transmembrane region" description="Helical; Name=4" evidence="4">
    <location>
        <begin position="278"/>
        <end position="295"/>
    </location>
</feature>
<feature type="topological domain" description="Cytoplasmic" evidence="4">
    <location>
        <begin position="296"/>
        <end position="647"/>
    </location>
</feature>
<feature type="transmembrane region" description="Helical; Name=5" evidence="4">
    <location>
        <begin position="648"/>
        <end position="669"/>
    </location>
</feature>
<feature type="topological domain" description="Extracellular" evidence="4">
    <location>
        <begin position="670"/>
        <end position="674"/>
    </location>
</feature>
<feature type="transmembrane region" description="Helical; Name=6" evidence="4">
    <location>
        <begin position="675"/>
        <end position="697"/>
    </location>
</feature>
<feature type="topological domain" description="Cytoplasmic" evidence="4">
    <location>
        <begin position="698"/>
        <end position="713"/>
    </location>
</feature>
<feature type="transmembrane region" description="Helical; Name=7" evidence="4">
    <location>
        <begin position="714"/>
        <end position="734"/>
    </location>
</feature>
<feature type="topological domain" description="Extracellular" evidence="4">
    <location>
        <begin position="735"/>
        <end position="759"/>
    </location>
</feature>
<feature type="transmembrane region" description="Helical; Name=8" evidence="4">
    <location>
        <begin position="760"/>
        <end position="780"/>
    </location>
</feature>
<feature type="topological domain" description="Cytoplasmic" evidence="4">
    <location>
        <begin position="781"/>
        <end position="792"/>
    </location>
</feature>
<feature type="transmembrane region" description="Helical; Name=9" evidence="4">
    <location>
        <begin position="793"/>
        <end position="813"/>
    </location>
</feature>
<feature type="topological domain" description="Extracellular" evidence="4">
    <location>
        <begin position="814"/>
        <end position="821"/>
    </location>
</feature>
<feature type="transmembrane region" description="Helical; Name=10" evidence="4">
    <location>
        <begin position="822"/>
        <end position="842"/>
    </location>
</feature>
<feature type="topological domain" description="Cytoplasmic" evidence="4">
    <location>
        <begin position="843"/>
        <end position="956"/>
    </location>
</feature>
<feature type="region of interest" description="Interaction with 14-3-3 proteins" evidence="1">
    <location>
        <begin position="954"/>
        <end position="956"/>
    </location>
</feature>
<feature type="active site" description="4-aspartylphosphate intermediate" evidence="1">
    <location>
        <position position="333"/>
    </location>
</feature>
<feature type="binding site" evidence="1">
    <location>
        <position position="592"/>
    </location>
    <ligand>
        <name>Mg(2+)</name>
        <dbReference type="ChEBI" id="CHEBI:18420"/>
    </ligand>
</feature>
<feature type="binding site" evidence="1">
    <location>
        <position position="596"/>
    </location>
    <ligand>
        <name>Mg(2+)</name>
        <dbReference type="ChEBI" id="CHEBI:18420"/>
    </ligand>
</feature>
<feature type="modified residue" description="Phosphothreonine" evidence="7">
    <location>
        <position position="889"/>
    </location>
</feature>
<feature type="modified residue" description="Phosphoserine" evidence="2">
    <location>
        <position position="938"/>
    </location>
</feature>
<feature type="modified residue" description="Phosphothreonine" evidence="3">
    <location>
        <position position="955"/>
    </location>
</feature>
<accession>Q9LV11</accession>
<evidence type="ECO:0000250" key="1"/>
<evidence type="ECO:0000250" key="2">
    <source>
        <dbReference type="UniProtKB" id="P19456"/>
    </source>
</evidence>
<evidence type="ECO:0000250" key="3">
    <source>
        <dbReference type="UniProtKB" id="P20649"/>
    </source>
</evidence>
<evidence type="ECO:0000255" key="4"/>
<evidence type="ECO:0000269" key="5">
    <source>
    </source>
</evidence>
<evidence type="ECO:0000305" key="6"/>
<evidence type="ECO:0007744" key="7">
    <source>
    </source>
</evidence>
<dbReference type="EC" id="7.1.2.1"/>
<dbReference type="EMBL" id="AB020751">
    <property type="protein sequence ID" value="BAA97214.1"/>
    <property type="molecule type" value="Genomic_DNA"/>
</dbReference>
<dbReference type="EMBL" id="CP002688">
    <property type="protein sequence ID" value="AED97641.1"/>
    <property type="molecule type" value="Genomic_DNA"/>
</dbReference>
<dbReference type="EMBL" id="AY125493">
    <property type="protein sequence ID" value="AAM78085.1"/>
    <property type="molecule type" value="mRNA"/>
</dbReference>
<dbReference type="RefSeq" id="NP_201073.1">
    <property type="nucleotide sequence ID" value="NM_125662.4"/>
</dbReference>
<dbReference type="SMR" id="Q9LV11"/>
<dbReference type="BioGRID" id="21631">
    <property type="interactions" value="7"/>
</dbReference>
<dbReference type="FunCoup" id="Q9LV11">
    <property type="interactions" value="541"/>
</dbReference>
<dbReference type="STRING" id="3702.Q9LV11"/>
<dbReference type="iPTMnet" id="Q9LV11"/>
<dbReference type="PaxDb" id="3702-AT5G62670.1"/>
<dbReference type="ProteomicsDB" id="226182"/>
<dbReference type="EnsemblPlants" id="AT5G62670.1">
    <property type="protein sequence ID" value="AT5G62670.1"/>
    <property type="gene ID" value="AT5G62670"/>
</dbReference>
<dbReference type="GeneID" id="836388"/>
<dbReference type="Gramene" id="AT5G62670.1">
    <property type="protein sequence ID" value="AT5G62670.1"/>
    <property type="gene ID" value="AT5G62670"/>
</dbReference>
<dbReference type="KEGG" id="ath:AT5G62670"/>
<dbReference type="Araport" id="AT5G62670"/>
<dbReference type="TAIR" id="AT5G62670">
    <property type="gene designation" value="HA11"/>
</dbReference>
<dbReference type="eggNOG" id="KOG0205">
    <property type="taxonomic scope" value="Eukaryota"/>
</dbReference>
<dbReference type="HOGENOM" id="CLU_002360_6_4_1"/>
<dbReference type="InParanoid" id="Q9LV11"/>
<dbReference type="OMA" id="VIEFHPF"/>
<dbReference type="OrthoDB" id="116380at2759"/>
<dbReference type="PhylomeDB" id="Q9LV11"/>
<dbReference type="BioCyc" id="ARA:AT5G62670-MONOMER"/>
<dbReference type="PRO" id="PR:Q9LV11"/>
<dbReference type="Proteomes" id="UP000006548">
    <property type="component" value="Chromosome 5"/>
</dbReference>
<dbReference type="ExpressionAtlas" id="Q9LV11">
    <property type="expression patterns" value="baseline and differential"/>
</dbReference>
<dbReference type="GO" id="GO:0005886">
    <property type="term" value="C:plasma membrane"/>
    <property type="evidence" value="ECO:0007005"/>
    <property type="project" value="TAIR"/>
</dbReference>
<dbReference type="GO" id="GO:0005524">
    <property type="term" value="F:ATP binding"/>
    <property type="evidence" value="ECO:0007669"/>
    <property type="project" value="UniProtKB-KW"/>
</dbReference>
<dbReference type="GO" id="GO:0016887">
    <property type="term" value="F:ATP hydrolysis activity"/>
    <property type="evidence" value="ECO:0007669"/>
    <property type="project" value="InterPro"/>
</dbReference>
<dbReference type="GO" id="GO:0046872">
    <property type="term" value="F:metal ion binding"/>
    <property type="evidence" value="ECO:0007669"/>
    <property type="project" value="UniProtKB-KW"/>
</dbReference>
<dbReference type="GO" id="GO:0003729">
    <property type="term" value="F:mRNA binding"/>
    <property type="evidence" value="ECO:0000314"/>
    <property type="project" value="TAIR"/>
</dbReference>
<dbReference type="GO" id="GO:0008553">
    <property type="term" value="F:P-type proton-exporting transporter activity"/>
    <property type="evidence" value="ECO:0007669"/>
    <property type="project" value="UniProtKB-EC"/>
</dbReference>
<dbReference type="GO" id="GO:0120029">
    <property type="term" value="P:proton export across plasma membrane"/>
    <property type="evidence" value="ECO:0007669"/>
    <property type="project" value="InterPro"/>
</dbReference>
<dbReference type="CDD" id="cd02076">
    <property type="entry name" value="P-type_ATPase_H"/>
    <property type="match status" value="1"/>
</dbReference>
<dbReference type="FunFam" id="1.20.1110.10:FF:000045">
    <property type="entry name" value="ATPase 4 plasma membrane-type"/>
    <property type="match status" value="1"/>
</dbReference>
<dbReference type="FunFam" id="2.70.150.10:FF:000004">
    <property type="entry name" value="Plasma membrane ATPase"/>
    <property type="match status" value="1"/>
</dbReference>
<dbReference type="FunFam" id="3.40.1110.10:FF:000004">
    <property type="entry name" value="Plasma membrane ATPase"/>
    <property type="match status" value="1"/>
</dbReference>
<dbReference type="FunFam" id="3.40.50.1000:FF:000211">
    <property type="entry name" value="Plasma membrane ATPase"/>
    <property type="match status" value="1"/>
</dbReference>
<dbReference type="Gene3D" id="6.10.140.890">
    <property type="match status" value="1"/>
</dbReference>
<dbReference type="Gene3D" id="3.40.1110.10">
    <property type="entry name" value="Calcium-transporting ATPase, cytoplasmic domain N"/>
    <property type="match status" value="1"/>
</dbReference>
<dbReference type="Gene3D" id="2.70.150.10">
    <property type="entry name" value="Calcium-transporting ATPase, cytoplasmic transduction domain A"/>
    <property type="match status" value="1"/>
</dbReference>
<dbReference type="Gene3D" id="1.20.1110.10">
    <property type="entry name" value="Calcium-transporting ATPase, transmembrane domain"/>
    <property type="match status" value="1"/>
</dbReference>
<dbReference type="Gene3D" id="3.40.50.1000">
    <property type="entry name" value="HAD superfamily/HAD-like"/>
    <property type="match status" value="1"/>
</dbReference>
<dbReference type="InterPro" id="IPR004014">
    <property type="entry name" value="ATPase_P-typ_cation-transptr_N"/>
</dbReference>
<dbReference type="InterPro" id="IPR023299">
    <property type="entry name" value="ATPase_P-typ_cyto_dom_N"/>
</dbReference>
<dbReference type="InterPro" id="IPR018303">
    <property type="entry name" value="ATPase_P-typ_P_site"/>
</dbReference>
<dbReference type="InterPro" id="IPR023298">
    <property type="entry name" value="ATPase_P-typ_TM_dom_sf"/>
</dbReference>
<dbReference type="InterPro" id="IPR008250">
    <property type="entry name" value="ATPase_P-typ_transduc_dom_A_sf"/>
</dbReference>
<dbReference type="InterPro" id="IPR036412">
    <property type="entry name" value="HAD-like_sf"/>
</dbReference>
<dbReference type="InterPro" id="IPR023214">
    <property type="entry name" value="HAD_sf"/>
</dbReference>
<dbReference type="InterPro" id="IPR006534">
    <property type="entry name" value="P-type_ATPase_IIIA"/>
</dbReference>
<dbReference type="InterPro" id="IPR001757">
    <property type="entry name" value="P_typ_ATPase"/>
</dbReference>
<dbReference type="InterPro" id="IPR044492">
    <property type="entry name" value="P_typ_ATPase_HD_dom"/>
</dbReference>
<dbReference type="NCBIfam" id="TIGR01647">
    <property type="entry name" value="ATPase-IIIA_H"/>
    <property type="match status" value="1"/>
</dbReference>
<dbReference type="NCBIfam" id="TIGR01494">
    <property type="entry name" value="ATPase_P-type"/>
    <property type="match status" value="2"/>
</dbReference>
<dbReference type="PANTHER" id="PTHR42861">
    <property type="entry name" value="CALCIUM-TRANSPORTING ATPASE"/>
    <property type="match status" value="1"/>
</dbReference>
<dbReference type="Pfam" id="PF00690">
    <property type="entry name" value="Cation_ATPase_N"/>
    <property type="match status" value="1"/>
</dbReference>
<dbReference type="Pfam" id="PF00122">
    <property type="entry name" value="E1-E2_ATPase"/>
    <property type="match status" value="1"/>
</dbReference>
<dbReference type="Pfam" id="PF00702">
    <property type="entry name" value="Hydrolase"/>
    <property type="match status" value="1"/>
</dbReference>
<dbReference type="PRINTS" id="PR00119">
    <property type="entry name" value="CATATPASE"/>
</dbReference>
<dbReference type="PRINTS" id="PR00120">
    <property type="entry name" value="HATPASE"/>
</dbReference>
<dbReference type="SFLD" id="SFLDG00002">
    <property type="entry name" value="C1.7:_P-type_atpase_like"/>
    <property type="match status" value="1"/>
</dbReference>
<dbReference type="SFLD" id="SFLDF00027">
    <property type="entry name" value="p-type_atpase"/>
    <property type="match status" value="1"/>
</dbReference>
<dbReference type="SMART" id="SM00831">
    <property type="entry name" value="Cation_ATPase_N"/>
    <property type="match status" value="1"/>
</dbReference>
<dbReference type="SUPFAM" id="SSF81653">
    <property type="entry name" value="Calcium ATPase, transduction domain A"/>
    <property type="match status" value="1"/>
</dbReference>
<dbReference type="SUPFAM" id="SSF81665">
    <property type="entry name" value="Calcium ATPase, transmembrane domain M"/>
    <property type="match status" value="1"/>
</dbReference>
<dbReference type="SUPFAM" id="SSF56784">
    <property type="entry name" value="HAD-like"/>
    <property type="match status" value="1"/>
</dbReference>
<dbReference type="PROSITE" id="PS00154">
    <property type="entry name" value="ATPASE_E1_E2"/>
    <property type="match status" value="1"/>
</dbReference>
<name>PMA11_ARATH</name>
<keyword id="KW-0067">ATP-binding</keyword>
<keyword id="KW-0375">Hydrogen ion transport</keyword>
<keyword id="KW-0406">Ion transport</keyword>
<keyword id="KW-0460">Magnesium</keyword>
<keyword id="KW-0472">Membrane</keyword>
<keyword id="KW-0479">Metal-binding</keyword>
<keyword id="KW-0547">Nucleotide-binding</keyword>
<keyword id="KW-0597">Phosphoprotein</keyword>
<keyword id="KW-1185">Reference proteome</keyword>
<keyword id="KW-1278">Translocase</keyword>
<keyword id="KW-0812">Transmembrane</keyword>
<keyword id="KW-1133">Transmembrane helix</keyword>
<keyword id="KW-0813">Transport</keyword>